<dbReference type="EMBL" id="GG704573">
    <property type="protein sequence ID" value="EEX04123.1"/>
    <property type="molecule type" value="Genomic_DNA"/>
</dbReference>
<dbReference type="RefSeq" id="WP_000044170.1">
    <property type="nucleotide sequence ID" value="NZ_MJHA01000009.1"/>
</dbReference>
<dbReference type="PDB" id="5FR8">
    <property type="method" value="X-ray"/>
    <property type="resolution" value="2.83 A"/>
    <property type="chains" value="A/B=25-754"/>
</dbReference>
<dbReference type="PDBsum" id="5FR8"/>
<dbReference type="SMR" id="D0C8V9"/>
<dbReference type="PATRIC" id="fig|575584.18.peg.3088"/>
<dbReference type="Proteomes" id="UP000005740">
    <property type="component" value="Unassembled WGS sequence"/>
</dbReference>
<dbReference type="GO" id="GO:0009279">
    <property type="term" value="C:cell outer membrane"/>
    <property type="evidence" value="ECO:0007669"/>
    <property type="project" value="UniProtKB-SubCell"/>
</dbReference>
<dbReference type="GO" id="GO:0046930">
    <property type="term" value="C:pore complex"/>
    <property type="evidence" value="ECO:0007669"/>
    <property type="project" value="UniProtKB-KW"/>
</dbReference>
<dbReference type="GO" id="GO:0015288">
    <property type="term" value="F:porin activity"/>
    <property type="evidence" value="ECO:0007669"/>
    <property type="project" value="UniProtKB-KW"/>
</dbReference>
<dbReference type="GO" id="GO:0015344">
    <property type="term" value="F:siderophore uptake transmembrane transporter activity"/>
    <property type="evidence" value="ECO:0007669"/>
    <property type="project" value="TreeGrafter"/>
</dbReference>
<dbReference type="GO" id="GO:0038023">
    <property type="term" value="F:signaling receptor activity"/>
    <property type="evidence" value="ECO:0007669"/>
    <property type="project" value="InterPro"/>
</dbReference>
<dbReference type="CDD" id="cd01347">
    <property type="entry name" value="ligand_gated_channel"/>
    <property type="match status" value="1"/>
</dbReference>
<dbReference type="Gene3D" id="2.40.170.20">
    <property type="entry name" value="TonB-dependent receptor, beta-barrel domain"/>
    <property type="match status" value="1"/>
</dbReference>
<dbReference type="Gene3D" id="2.170.130.10">
    <property type="entry name" value="TonB-dependent receptor, plug domain"/>
    <property type="match status" value="1"/>
</dbReference>
<dbReference type="InterPro" id="IPR012910">
    <property type="entry name" value="Plug_dom"/>
</dbReference>
<dbReference type="InterPro" id="IPR037066">
    <property type="entry name" value="Plug_dom_sf"/>
</dbReference>
<dbReference type="InterPro" id="IPR039426">
    <property type="entry name" value="TonB-dep_rcpt-like"/>
</dbReference>
<dbReference type="InterPro" id="IPR000531">
    <property type="entry name" value="TonB-dep_rcpt_b-brl"/>
</dbReference>
<dbReference type="InterPro" id="IPR036942">
    <property type="entry name" value="TonB_rcpt_b-brl_sf"/>
</dbReference>
<dbReference type="InterPro" id="IPR010917">
    <property type="entry name" value="TonB_rcpt_CS"/>
</dbReference>
<dbReference type="InterPro" id="IPR010105">
    <property type="entry name" value="TonB_sidphr_rcpt"/>
</dbReference>
<dbReference type="NCBIfam" id="NF010048">
    <property type="entry name" value="PRK13524.1"/>
    <property type="match status" value="1"/>
</dbReference>
<dbReference type="NCBIfam" id="NF010051">
    <property type="entry name" value="PRK13528.1"/>
    <property type="match status" value="1"/>
</dbReference>
<dbReference type="NCBIfam" id="TIGR01783">
    <property type="entry name" value="TonB-siderophor"/>
    <property type="match status" value="1"/>
</dbReference>
<dbReference type="PANTHER" id="PTHR30069">
    <property type="entry name" value="TONB-DEPENDENT OUTER MEMBRANE RECEPTOR"/>
    <property type="match status" value="1"/>
</dbReference>
<dbReference type="PANTHER" id="PTHR30069:SF8">
    <property type="entry name" value="TONB-DEPENDENT SIDEROPHORE RECEPTOR PROTEIN"/>
    <property type="match status" value="1"/>
</dbReference>
<dbReference type="Pfam" id="PF07715">
    <property type="entry name" value="Plug"/>
    <property type="match status" value="1"/>
</dbReference>
<dbReference type="Pfam" id="PF00593">
    <property type="entry name" value="TonB_dep_Rec_b-barrel"/>
    <property type="match status" value="1"/>
</dbReference>
<dbReference type="SUPFAM" id="SSF56935">
    <property type="entry name" value="Porins"/>
    <property type="match status" value="1"/>
</dbReference>
<dbReference type="PROSITE" id="PS01156">
    <property type="entry name" value="TONB_DEPENDENT_REC_2"/>
    <property type="match status" value="1"/>
</dbReference>
<dbReference type="PROSITE" id="PS52016">
    <property type="entry name" value="TONB_DEPENDENT_REC_3"/>
    <property type="match status" value="1"/>
</dbReference>
<accession>D0C8V9</accession>
<keyword id="KW-0002">3D-structure</keyword>
<keyword id="KW-0998">Cell outer membrane</keyword>
<keyword id="KW-1015">Disulfide bond</keyword>
<keyword id="KW-0406">Ion transport</keyword>
<keyword id="KW-0408">Iron</keyword>
<keyword id="KW-0410">Iron transport</keyword>
<keyword id="KW-0472">Membrane</keyword>
<keyword id="KW-0626">Porin</keyword>
<keyword id="KW-0675">Receptor</keyword>
<keyword id="KW-1185">Reference proteome</keyword>
<keyword id="KW-0732">Signal</keyword>
<keyword id="KW-0798">TonB box</keyword>
<keyword id="KW-0812">Transmembrane</keyword>
<keyword id="KW-1134">Transmembrane beta strand</keyword>
<keyword id="KW-0813">Transport</keyword>
<proteinExistence type="evidence at protein level"/>
<feature type="signal peptide" evidence="1">
    <location>
        <begin position="1"/>
        <end position="24"/>
    </location>
</feature>
<feature type="chain" id="PRO_0000458861" description="Probable TonB-dependent siderophore receptor PirA" evidence="1">
    <location>
        <begin position="25"/>
        <end position="754"/>
    </location>
</feature>
<feature type="domain" description="TBDR plug" evidence="2">
    <location>
        <begin position="54"/>
        <end position="181"/>
    </location>
</feature>
<feature type="domain" description="TBDR beta-barrel" evidence="2">
    <location>
        <begin position="186"/>
        <end position="754"/>
    </location>
</feature>
<feature type="region of interest" description="Disordered" evidence="3">
    <location>
        <begin position="404"/>
        <end position="424"/>
    </location>
</feature>
<feature type="short sequence motif" description="TonB C-terminal box" evidence="2">
    <location>
        <begin position="737"/>
        <end position="754"/>
    </location>
</feature>
<feature type="compositionally biased region" description="Polar residues" evidence="3">
    <location>
        <begin position="404"/>
        <end position="414"/>
    </location>
</feature>
<feature type="disulfide bond" evidence="4 11">
    <location>
        <begin position="511"/>
        <end position="519"/>
    </location>
</feature>
<feature type="mutagenesis site" description="Despite cross-linking with fluorescein, capable of binding ferric enterobactin or ferric catecholates at micromolar affinity in vitro." evidence="5">
    <original>S</original>
    <variation>C</variation>
    <location>
        <position position="352"/>
    </location>
</feature>
<feature type="helix" evidence="12">
    <location>
        <begin position="52"/>
        <end position="55"/>
    </location>
</feature>
<feature type="helix" evidence="12">
    <location>
        <begin position="56"/>
        <end position="58"/>
    </location>
</feature>
<feature type="strand" evidence="12">
    <location>
        <begin position="62"/>
        <end position="66"/>
    </location>
</feature>
<feature type="helix" evidence="12">
    <location>
        <begin position="67"/>
        <end position="72"/>
    </location>
</feature>
<feature type="helix" evidence="12">
    <location>
        <begin position="80"/>
        <end position="83"/>
    </location>
</feature>
<feature type="strand" evidence="12">
    <location>
        <begin position="89"/>
        <end position="92"/>
    </location>
</feature>
<feature type="turn" evidence="12">
    <location>
        <begin position="99"/>
        <end position="102"/>
    </location>
</feature>
<feature type="strand" evidence="12">
    <location>
        <begin position="105"/>
        <end position="108"/>
    </location>
</feature>
<feature type="helix" evidence="12">
    <location>
        <begin position="113"/>
        <end position="115"/>
    </location>
</feature>
<feature type="strand" evidence="12">
    <location>
        <begin position="116"/>
        <end position="120"/>
    </location>
</feature>
<feature type="helix" evidence="12">
    <location>
        <begin position="127"/>
        <end position="130"/>
    </location>
</feature>
<feature type="helix" evidence="12">
    <location>
        <begin position="150"/>
        <end position="152"/>
    </location>
</feature>
<feature type="strand" evidence="12">
    <location>
        <begin position="153"/>
        <end position="160"/>
    </location>
</feature>
<feature type="helix" evidence="12">
    <location>
        <begin position="161"/>
        <end position="167"/>
    </location>
</feature>
<feature type="strand" evidence="12">
    <location>
        <begin position="172"/>
        <end position="180"/>
    </location>
</feature>
<feature type="strand" evidence="12">
    <location>
        <begin position="188"/>
        <end position="200"/>
    </location>
</feature>
<feature type="strand" evidence="12">
    <location>
        <begin position="206"/>
        <end position="218"/>
    </location>
</feature>
<feature type="turn" evidence="12">
    <location>
        <begin position="219"/>
        <end position="221"/>
    </location>
</feature>
<feature type="strand" evidence="12">
    <location>
        <begin position="222"/>
        <end position="233"/>
    </location>
</feature>
<feature type="turn" evidence="12">
    <location>
        <begin position="238"/>
        <end position="241"/>
    </location>
</feature>
<feature type="helix" evidence="12">
    <location>
        <begin position="242"/>
        <end position="244"/>
    </location>
</feature>
<feature type="strand" evidence="12">
    <location>
        <begin position="253"/>
        <end position="268"/>
    </location>
</feature>
<feature type="strand" evidence="12">
    <location>
        <begin position="271"/>
        <end position="285"/>
    </location>
</feature>
<feature type="helix" evidence="12">
    <location>
        <begin position="296"/>
        <end position="298"/>
    </location>
</feature>
<feature type="helix" evidence="12">
    <location>
        <begin position="302"/>
        <end position="305"/>
    </location>
</feature>
<feature type="strand" evidence="12">
    <location>
        <begin position="311"/>
        <end position="326"/>
    </location>
</feature>
<feature type="strand" evidence="12">
    <location>
        <begin position="329"/>
        <end position="344"/>
    </location>
</feature>
<feature type="helix" evidence="12">
    <location>
        <begin position="351"/>
        <end position="353"/>
    </location>
</feature>
<feature type="strand" evidence="12">
    <location>
        <begin position="364"/>
        <end position="401"/>
    </location>
</feature>
<feature type="helix" evidence="12">
    <location>
        <begin position="417"/>
        <end position="421"/>
    </location>
</feature>
<feature type="strand" evidence="12">
    <location>
        <begin position="428"/>
        <end position="459"/>
    </location>
</feature>
<feature type="turn" evidence="12">
    <location>
        <begin position="460"/>
        <end position="462"/>
    </location>
</feature>
<feature type="strand" evidence="12">
    <location>
        <begin position="463"/>
        <end position="475"/>
    </location>
</feature>
<feature type="strand" evidence="12">
    <location>
        <begin position="477"/>
        <end position="491"/>
    </location>
</feature>
<feature type="helix" evidence="12">
    <location>
        <begin position="495"/>
        <end position="498"/>
    </location>
</feature>
<feature type="strand" evidence="12">
    <location>
        <begin position="503"/>
        <end position="508"/>
    </location>
</feature>
<feature type="strand" evidence="12">
    <location>
        <begin position="519"/>
        <end position="522"/>
    </location>
</feature>
<feature type="strand" evidence="12">
    <location>
        <begin position="530"/>
        <end position="542"/>
    </location>
</feature>
<feature type="strand" evidence="12">
    <location>
        <begin position="544"/>
        <end position="562"/>
    </location>
</feature>
<feature type="strand" evidence="12">
    <location>
        <begin position="569"/>
        <end position="574"/>
    </location>
</feature>
<feature type="turn" evidence="12">
    <location>
        <begin position="578"/>
        <end position="580"/>
    </location>
</feature>
<feature type="strand" evidence="12">
    <location>
        <begin position="585"/>
        <end position="592"/>
    </location>
</feature>
<feature type="strand" evidence="12">
    <location>
        <begin position="594"/>
        <end position="612"/>
    </location>
</feature>
<feature type="strand" evidence="12">
    <location>
        <begin position="615"/>
        <end position="629"/>
    </location>
</feature>
<feature type="turn" evidence="12">
    <location>
        <begin position="630"/>
        <end position="632"/>
    </location>
</feature>
<feature type="strand" evidence="12">
    <location>
        <begin position="641"/>
        <end position="651"/>
    </location>
</feature>
<feature type="strand" evidence="12">
    <location>
        <begin position="653"/>
        <end position="665"/>
    </location>
</feature>
<feature type="turn" evidence="12">
    <location>
        <begin position="677"/>
        <end position="681"/>
    </location>
</feature>
<feature type="helix" evidence="12">
    <location>
        <begin position="686"/>
        <end position="689"/>
    </location>
</feature>
<feature type="strand" evidence="12">
    <location>
        <begin position="699"/>
        <end position="708"/>
    </location>
</feature>
<feature type="strand" evidence="12">
    <location>
        <begin position="711"/>
        <end position="722"/>
    </location>
</feature>
<feature type="strand" evidence="12">
    <location>
        <begin position="745"/>
        <end position="752"/>
    </location>
</feature>
<name>PIRA_ACIB2</name>
<gene>
    <name evidence="6" type="primary">pirA</name>
    <name evidence="6" type="ORF">A1S_0980</name>
    <name evidence="9" type="ORF">HMPREF0010_01517</name>
</gene>
<protein>
    <recommendedName>
        <fullName evidence="8">Probable TonB-dependent siderophore receptor PirA</fullName>
    </recommendedName>
</protein>
<reference evidence="10" key="1">
    <citation type="journal article" date="2012" name="PLoS ONE">
        <title>The success of Acinetobacter species; genetic, metabolic and virulence attributes.</title>
        <authorList>
            <person name="Peleg A.Y."/>
            <person name="de Breij A."/>
            <person name="Adams M.D."/>
            <person name="Cerqueira G.M."/>
            <person name="Mocali S."/>
            <person name="Galardini M."/>
            <person name="Nibbering P.H."/>
            <person name="Earl A.M."/>
            <person name="Ward D.V."/>
            <person name="Paterson D.L."/>
            <person name="Seifert H."/>
            <person name="Dijkshoorn L."/>
        </authorList>
    </citation>
    <scope>NUCLEOTIDE SEQUENCE [LARGE SCALE GENOMIC DNA]</scope>
    <source>
        <strain evidence="10">ATCC 19606 / DSM 30007 / JCM 6841 / CCUG 19606 / CIP 70.34 / NBRC 109757 / NCIMB 12457 / NCTC 12156 / 81</strain>
    </source>
</reference>
<reference evidence="7" key="2">
    <citation type="journal article" date="2022" name="J. Biol. Chem.">
        <title>Fluorescent sensors of siderophores produced by bacterial pathogens.</title>
        <authorList>
            <person name="Kumar A."/>
            <person name="Yang T."/>
            <person name="Chakravorty S."/>
            <person name="Majumdar A."/>
            <person name="Nairn B.L."/>
            <person name="Six D.A."/>
            <person name="Marcondes Dos Santos N."/>
            <person name="Price S.L."/>
            <person name="Lawrenz M.B."/>
            <person name="Actis L.A."/>
            <person name="Marques M."/>
            <person name="Russo T.A."/>
            <person name="Newton S.M."/>
            <person name="Klebba P.E."/>
        </authorList>
    </citation>
    <scope>FUNCTION</scope>
    <scope>MUTAGENESIS OF SER-352</scope>
</reference>
<reference evidence="11" key="3">
    <citation type="journal article" date="2017" name="Antimicrob. Agents Chemother.">
        <title>Structure and Function of the PiuA and PirA Siderophore-Drug Receptors from Pseudomonas aeruginosa and Acinetobacter baumannii.</title>
        <authorList>
            <person name="Moynie L."/>
            <person name="Luscher A."/>
            <person name="Rolo D."/>
            <person name="Pletzer D."/>
            <person name="Tortajada A."/>
            <person name="Weingart H."/>
            <person name="Braun Y."/>
            <person name="Page M.G."/>
            <person name="Naismith J.H."/>
            <person name="Kohler T."/>
        </authorList>
    </citation>
    <scope>X-RAY CRYSTALLOGRAPHY (2.83 ANGSTROMS) OF 25-754</scope>
    <scope>FUNCTION</scope>
    <scope>DISRUPTION PHENOTYPE</scope>
    <scope>DISULFIDE BOND</scope>
</reference>
<evidence type="ECO:0000255" key="1"/>
<evidence type="ECO:0000255" key="2">
    <source>
        <dbReference type="PROSITE-ProRule" id="PRU01360"/>
    </source>
</evidence>
<evidence type="ECO:0000256" key="3">
    <source>
        <dbReference type="SAM" id="MobiDB-lite"/>
    </source>
</evidence>
<evidence type="ECO:0000269" key="4">
    <source>
    </source>
</evidence>
<evidence type="ECO:0000269" key="5">
    <source>
    </source>
</evidence>
<evidence type="ECO:0000303" key="6">
    <source>
    </source>
</evidence>
<evidence type="ECO:0000305" key="7"/>
<evidence type="ECO:0000305" key="8">
    <source>
    </source>
</evidence>
<evidence type="ECO:0000312" key="9">
    <source>
        <dbReference type="EMBL" id="EEX04123.1"/>
    </source>
</evidence>
<evidence type="ECO:0000312" key="10">
    <source>
        <dbReference type="Proteomes" id="UP000005740"/>
    </source>
</evidence>
<evidence type="ECO:0007744" key="11">
    <source>
        <dbReference type="PDB" id="5FR8"/>
    </source>
</evidence>
<evidence type="ECO:0007829" key="12">
    <source>
        <dbReference type="PDB" id="5FR8"/>
    </source>
</evidence>
<sequence length="754" mass="82818">MSKRIIQSVLSVSVLASMMSMAFAAQNEQEQAEQTLEKPAEPVKLETIFVTAEEQVKQSLGVSVITKEDLEKLPVRNDISDYVRRMPGVNLTGNSATGQRGNNRQIDIRGMGPENTLILVDGKPINSRNSVRYGWKGERDTRGDSNWVPAEAIESIEVLRGPAAARYGSGAAGGVVNIITKKVTNETHGSVEFYTSQPEDSKEGSSNRVGFNVSGPLIKDVLSYRLYGNYNKTEADDVDINKSIGSTAAGREGVKNKDISGRLAWQATDQQTVLLDISSSKQGNIYSGDSQLNANAEADAILSQLIGKETNTMYRDSYALTHEGDWSWGKSKLVAQYDKTHNKRLPEGLAGSVEGKINNLDDKATSRLETLRFNGEANIPFEYYLPQVLTVGTEWVEDRFKDNVSTTQGKDSSGSGYGDQLAKGDRSKMESRIASAYIEDNLKVTDSTDVVLGLRFDDHSKSGSNWSPSLNITQKLNDYFTLKGGVAKAYKAPNMYQNAEGYLLSTNGNGCPANIESRCLLQGNGDLKPETSVNKELGIQFQKDIVNASLTWFRNDYKDKIVAGTHVVGTVDGSSTNANTGAVTNTKWNILRWENTPKALIQGFEGSLGLDFGDIRWTNNFTYMMDSKDKQTGNPLSLVPIYTINSIFDYDITDQLDVNFVFTQYGRQKSRQFAENRLESGIGSGGANSALKPSTVKSYSTAGINVGYKFSDQISTRVGVSNLFDKQILRDSNSISQTYNEPGRAYYASLKYSF</sequence>
<comment type="function">
    <text evidence="4 5">Probably involved in the initial step of iron uptake by binding iron chelating siderophores, thereby allowing extraction of iron from the environment (PubMed:28137795). May bind the siderophore, ferric enterobactin, with micromolar affinity (PubMed:35101443).</text>
</comment>
<comment type="subcellular location">
    <subcellularLocation>
        <location evidence="2">Cell outer membrane</location>
        <topology evidence="2">Multi-pass membrane protein</topology>
    </subcellularLocation>
</comment>
<comment type="disruption phenotype">
    <text evidence="4">Deletion decreases sensitivity to siderophore-beta-lactam drug conjugates.</text>
</comment>
<comment type="similarity">
    <text evidence="7">Belongs to the TonB-dependent receptor family.</text>
</comment>
<organism evidence="10">
    <name type="scientific">Acinetobacter baumannii (strain ATCC 19606 / DSM 30007 / JCM 6841 / CCUG 19606 / CIP 70.34 / NBRC 109757 / NCIMB 12457 / NCTC 12156 / 81)</name>
    <dbReference type="NCBI Taxonomy" id="575584"/>
    <lineage>
        <taxon>Bacteria</taxon>
        <taxon>Pseudomonadati</taxon>
        <taxon>Pseudomonadota</taxon>
        <taxon>Gammaproteobacteria</taxon>
        <taxon>Moraxellales</taxon>
        <taxon>Moraxellaceae</taxon>
        <taxon>Acinetobacter</taxon>
        <taxon>Acinetobacter calcoaceticus/baumannii complex</taxon>
    </lineage>
</organism>